<name>OSMR_HUMAN</name>
<protein>
    <recommendedName>
        <fullName>Oncostatin-M-specific receptor subunit beta</fullName>
    </recommendedName>
    <alternativeName>
        <fullName>Interleukin-31 receptor subunit beta</fullName>
        <shortName>IL-31 receptor subunit beta</shortName>
        <shortName>IL-31R subunit beta</shortName>
        <shortName>IL-31R-beta</shortName>
        <shortName>IL-31RB</shortName>
    </alternativeName>
</protein>
<gene>
    <name type="primary">OSMR</name>
    <name type="synonym">OSMRB</name>
</gene>
<organism>
    <name type="scientific">Homo sapiens</name>
    <name type="common">Human</name>
    <dbReference type="NCBI Taxonomy" id="9606"/>
    <lineage>
        <taxon>Eukaryota</taxon>
        <taxon>Metazoa</taxon>
        <taxon>Chordata</taxon>
        <taxon>Craniata</taxon>
        <taxon>Vertebrata</taxon>
        <taxon>Euteleostomi</taxon>
        <taxon>Mammalia</taxon>
        <taxon>Eutheria</taxon>
        <taxon>Euarchontoglires</taxon>
        <taxon>Primates</taxon>
        <taxon>Haplorrhini</taxon>
        <taxon>Catarrhini</taxon>
        <taxon>Hominidae</taxon>
        <taxon>Homo</taxon>
    </lineage>
</organism>
<sequence length="979" mass="110509">MALFAVFQTTFFLTLLSLRTYQSEVLAERLPLTPVSLKVSTNSTRQSLHLQWTVHNLPYHQELKMVFQIQISRIETSNVIWVGNYSTTVKWNQVLHWSWESELPLECATHFVRIKSLVDDAKFPEPNFWSNWSSWEEVSVQDSTGQDILFVFPKDKLVEEGTNVTICYVSRNIQNNVSCYLEGKQIHGEQLDPHVTAFNLNSVPFIRNKGTNIYCEASQGNVSEGMKGIVLFVSKVLEEPKDFSCETEDFKTLHCTWDPGTDTALGWSKQPSQSYTLFESFSGEKKLCTHKNWCNWQITQDSQETYNFTLIAENYLRKRSVNILFNLTHRVYLMNPFSVNFENVNATNAIMTWKVHSIRNNFTYLCQIELHGEGKMMQYNVSIKVNGEYFLSELEPATEYMARVRCADASHFWKWSEWSGQNFTTLEAAPSEAPDVWRIVSLEPGNHTVTLFWKPLSKLHANGKILFYNVVVENLDKPSSSELHSIPAPANSTKLILDRCSYQICVIANNSVGASPASVIVISADPENKEVEEERIAGTEGGFSLSWKPQPGDVIGYVVDWCDHTQDVLGDFQWKNVGPNTTSTVISTDAFRPGVRYDFRIYGLSTKRIACLLEKKTGYSQELAPSDNPHVLVDTLTSHSFTLSWKDYSTESQPGFIQGYHVYLKSKARQCHPRFEKAVLSDGSECCKYKIDNPEEKALIVDNLKPESFYEFFITPFTSAGEGPSATFTKVTTPDEHSSMLIHILLPMVFCVLLIMVMCYLKSQWIKETCYPDIPDPYKSSILSLIKFKENPHLIIMNVSDCIPDAIEVVSKPEGTKIQFLGTRKSLTETELTKPNYLYLLPTEKNHSGPGPCICFENLTYNQAASDSGSCGHVPVSPKAPSMLGLMTSPENVLKALEKNYMNSLGEIPAGETSLNYVSQLASPMFGDKDSLPTNPVEAPHCSEYKMQMAVSLRLALPPPTENSSLSSITLLDPGEHYC</sequence>
<dbReference type="EMBL" id="U60805">
    <property type="protein sequence ID" value="AAC50946.1"/>
    <property type="molecule type" value="mRNA"/>
</dbReference>
<dbReference type="EMBL" id="BC010943">
    <property type="protein sequence ID" value="AAH10943.1"/>
    <property type="molecule type" value="mRNA"/>
</dbReference>
<dbReference type="EMBL" id="BC063468">
    <property type="protein sequence ID" value="AAH63468.1"/>
    <property type="status" value="ALT_SEQ"/>
    <property type="molecule type" value="mRNA"/>
</dbReference>
<dbReference type="EMBL" id="BC125209">
    <property type="protein sequence ID" value="AAI25210.1"/>
    <property type="molecule type" value="mRNA"/>
</dbReference>
<dbReference type="EMBL" id="BC125210">
    <property type="protein sequence ID" value="AAI25211.1"/>
    <property type="molecule type" value="mRNA"/>
</dbReference>
<dbReference type="CCDS" id="CCDS3928.1">
    <molecule id="Q99650-1"/>
</dbReference>
<dbReference type="CCDS" id="CCDS54847.1">
    <molecule id="Q99650-2"/>
</dbReference>
<dbReference type="RefSeq" id="NP_001161827.1">
    <molecule id="Q99650-2"/>
    <property type="nucleotide sequence ID" value="NM_001168355.3"/>
</dbReference>
<dbReference type="RefSeq" id="NP_001310433.1">
    <molecule id="Q99650-2"/>
    <property type="nucleotide sequence ID" value="NM_001323504.2"/>
</dbReference>
<dbReference type="RefSeq" id="NP_001310434.1">
    <molecule id="Q99650-1"/>
    <property type="nucleotide sequence ID" value="NM_001323505.2"/>
</dbReference>
<dbReference type="RefSeq" id="NP_001310435.1">
    <property type="nucleotide sequence ID" value="NM_001323506.1"/>
</dbReference>
<dbReference type="RefSeq" id="NP_001310436.1">
    <property type="nucleotide sequence ID" value="NM_001323507.1"/>
</dbReference>
<dbReference type="RefSeq" id="NP_003990.1">
    <molecule id="Q99650-1"/>
    <property type="nucleotide sequence ID" value="NM_003999.3"/>
</dbReference>
<dbReference type="RefSeq" id="XP_047273827.1">
    <molecule id="Q99650-1"/>
    <property type="nucleotide sequence ID" value="XM_047417871.1"/>
</dbReference>
<dbReference type="RefSeq" id="XP_054209758.1">
    <molecule id="Q99650-1"/>
    <property type="nucleotide sequence ID" value="XM_054353783.1"/>
</dbReference>
<dbReference type="SMR" id="Q99650"/>
<dbReference type="BioGRID" id="114617">
    <property type="interactions" value="116"/>
</dbReference>
<dbReference type="CORUM" id="Q99650"/>
<dbReference type="FunCoup" id="Q99650">
    <property type="interactions" value="764"/>
</dbReference>
<dbReference type="IntAct" id="Q99650">
    <property type="interactions" value="55"/>
</dbReference>
<dbReference type="MINT" id="Q99650"/>
<dbReference type="STRING" id="9606.ENSP00000274276"/>
<dbReference type="ChEMBL" id="CHEMBL4630885"/>
<dbReference type="GlyConnect" id="1965">
    <property type="glycosylation" value="16 N-Linked glycans (8 sites)"/>
</dbReference>
<dbReference type="GlyCosmos" id="Q99650">
    <property type="glycosylation" value="12 sites, 18 glycans"/>
</dbReference>
<dbReference type="GlyGen" id="Q99650">
    <property type="glycosylation" value="14 sites, 23 N-linked glycans (13 sites), 1 O-linked glycan (1 site)"/>
</dbReference>
<dbReference type="iPTMnet" id="Q99650"/>
<dbReference type="PhosphoSitePlus" id="Q99650"/>
<dbReference type="SwissPalm" id="Q99650"/>
<dbReference type="BioMuta" id="OSMR"/>
<dbReference type="DMDM" id="74724833"/>
<dbReference type="jPOST" id="Q99650"/>
<dbReference type="MassIVE" id="Q99650"/>
<dbReference type="PaxDb" id="9606-ENSP00000274276"/>
<dbReference type="PeptideAtlas" id="Q99650"/>
<dbReference type="ProteomicsDB" id="78379">
    <molecule id="Q99650-1"/>
</dbReference>
<dbReference type="ProteomicsDB" id="78380">
    <molecule id="Q99650-2"/>
</dbReference>
<dbReference type="Pumba" id="Q99650"/>
<dbReference type="Antibodypedia" id="2731">
    <property type="antibodies" value="438 antibodies from 35 providers"/>
</dbReference>
<dbReference type="DNASU" id="9180"/>
<dbReference type="Ensembl" id="ENST00000274276.8">
    <molecule id="Q99650-1"/>
    <property type="protein sequence ID" value="ENSP00000274276.3"/>
    <property type="gene ID" value="ENSG00000145623.13"/>
</dbReference>
<dbReference type="Ensembl" id="ENST00000502536.5">
    <molecule id="Q99650-2"/>
    <property type="protein sequence ID" value="ENSP00000422023.1"/>
    <property type="gene ID" value="ENSG00000145623.13"/>
</dbReference>
<dbReference type="GeneID" id="9180"/>
<dbReference type="KEGG" id="hsa:9180"/>
<dbReference type="MANE-Select" id="ENST00000274276.8">
    <property type="protein sequence ID" value="ENSP00000274276.3"/>
    <property type="RefSeq nucleotide sequence ID" value="NM_003999.3"/>
    <property type="RefSeq protein sequence ID" value="NP_003990.1"/>
</dbReference>
<dbReference type="UCSC" id="uc003jlm.2">
    <molecule id="Q99650-1"/>
    <property type="organism name" value="human"/>
</dbReference>
<dbReference type="AGR" id="HGNC:8507"/>
<dbReference type="CTD" id="9180"/>
<dbReference type="DisGeNET" id="9180"/>
<dbReference type="GeneCards" id="OSMR"/>
<dbReference type="HGNC" id="HGNC:8507">
    <property type="gene designation" value="OSMR"/>
</dbReference>
<dbReference type="HPA" id="ENSG00000145623">
    <property type="expression patterns" value="Low tissue specificity"/>
</dbReference>
<dbReference type="MalaCards" id="OSMR"/>
<dbReference type="MIM" id="105250">
    <property type="type" value="phenotype"/>
</dbReference>
<dbReference type="MIM" id="601743">
    <property type="type" value="gene"/>
</dbReference>
<dbReference type="neXtProt" id="NX_Q99650"/>
<dbReference type="OpenTargets" id="ENSG00000145623"/>
<dbReference type="Orphanet" id="353220">
    <property type="disease" value="Familial primary localized cutaneous amyloidosis"/>
</dbReference>
<dbReference type="PharmGKB" id="PA32837"/>
<dbReference type="VEuPathDB" id="HostDB:ENSG00000145623"/>
<dbReference type="eggNOG" id="ENOG502QWRV">
    <property type="taxonomic scope" value="Eukaryota"/>
</dbReference>
<dbReference type="GeneTree" id="ENSGT00940000160851"/>
<dbReference type="HOGENOM" id="CLU_046956_0_0_1"/>
<dbReference type="InParanoid" id="Q99650"/>
<dbReference type="OMA" id="GKMMQYN"/>
<dbReference type="OrthoDB" id="6382334at2759"/>
<dbReference type="PAN-GO" id="Q99650">
    <property type="GO annotations" value="8 GO annotations based on evolutionary models"/>
</dbReference>
<dbReference type="PhylomeDB" id="Q99650"/>
<dbReference type="TreeFam" id="TF338122"/>
<dbReference type="PathwayCommons" id="Q99650"/>
<dbReference type="Reactome" id="R-HSA-6788467">
    <property type="pathway name" value="IL-6-type cytokine receptor ligand interactions"/>
</dbReference>
<dbReference type="SignaLink" id="Q99650"/>
<dbReference type="SIGNOR" id="Q99650"/>
<dbReference type="BioGRID-ORCS" id="9180">
    <property type="hits" value="9 hits in 1149 CRISPR screens"/>
</dbReference>
<dbReference type="ChiTaRS" id="OSMR">
    <property type="organism name" value="human"/>
</dbReference>
<dbReference type="GeneWiki" id="Oncostatin_M_receptor"/>
<dbReference type="GenomeRNAi" id="9180"/>
<dbReference type="Pharos" id="Q99650">
    <property type="development level" value="Tbio"/>
</dbReference>
<dbReference type="PRO" id="PR:Q99650"/>
<dbReference type="Proteomes" id="UP000005640">
    <property type="component" value="Chromosome 5"/>
</dbReference>
<dbReference type="RNAct" id="Q99650">
    <property type="molecule type" value="protein"/>
</dbReference>
<dbReference type="Bgee" id="ENSG00000145623">
    <property type="expression patterns" value="Expressed in pericardium and 168 other cell types or tissues"/>
</dbReference>
<dbReference type="ExpressionAtlas" id="Q99650">
    <property type="expression patterns" value="baseline and differential"/>
</dbReference>
<dbReference type="GO" id="GO:0016324">
    <property type="term" value="C:apical plasma membrane"/>
    <property type="evidence" value="ECO:0000314"/>
    <property type="project" value="CACAO"/>
</dbReference>
<dbReference type="GO" id="GO:0009897">
    <property type="term" value="C:external side of plasma membrane"/>
    <property type="evidence" value="ECO:0000318"/>
    <property type="project" value="GO_Central"/>
</dbReference>
<dbReference type="GO" id="GO:0005900">
    <property type="term" value="C:oncostatin-M receptor complex"/>
    <property type="evidence" value="ECO:0000314"/>
    <property type="project" value="BHF-UCL"/>
</dbReference>
<dbReference type="GO" id="GO:0005886">
    <property type="term" value="C:plasma membrane"/>
    <property type="evidence" value="ECO:0000304"/>
    <property type="project" value="Reactome"/>
</dbReference>
<dbReference type="GO" id="GO:0043235">
    <property type="term" value="C:receptor complex"/>
    <property type="evidence" value="ECO:0000318"/>
    <property type="project" value="GO_Central"/>
</dbReference>
<dbReference type="GO" id="GO:0005127">
    <property type="term" value="F:ciliary neurotrophic factor receptor binding"/>
    <property type="evidence" value="ECO:0000318"/>
    <property type="project" value="GO_Central"/>
</dbReference>
<dbReference type="GO" id="GO:0019955">
    <property type="term" value="F:cytokine binding"/>
    <property type="evidence" value="ECO:0000318"/>
    <property type="project" value="GO_Central"/>
</dbReference>
<dbReference type="GO" id="GO:0004896">
    <property type="term" value="F:cytokine receptor activity"/>
    <property type="evidence" value="ECO:0000318"/>
    <property type="project" value="GO_Central"/>
</dbReference>
<dbReference type="GO" id="GO:0019838">
    <property type="term" value="F:growth factor binding"/>
    <property type="evidence" value="ECO:0000353"/>
    <property type="project" value="BHF-UCL"/>
</dbReference>
<dbReference type="GO" id="GO:0019221">
    <property type="term" value="P:cytokine-mediated signaling pathway"/>
    <property type="evidence" value="ECO:0000318"/>
    <property type="project" value="GO_Central"/>
</dbReference>
<dbReference type="GO" id="GO:0038165">
    <property type="term" value="P:oncostatin-M-mediated signaling pathway"/>
    <property type="evidence" value="ECO:0000315"/>
    <property type="project" value="BHF-UCL"/>
</dbReference>
<dbReference type="GO" id="GO:0002675">
    <property type="term" value="P:positive regulation of acute inflammatory response"/>
    <property type="evidence" value="ECO:0000305"/>
    <property type="project" value="BHF-UCL"/>
</dbReference>
<dbReference type="GO" id="GO:0008284">
    <property type="term" value="P:positive regulation of cell population proliferation"/>
    <property type="evidence" value="ECO:0000316"/>
    <property type="project" value="BHF-UCL"/>
</dbReference>
<dbReference type="GO" id="GO:0034097">
    <property type="term" value="P:response to cytokine"/>
    <property type="evidence" value="ECO:0000314"/>
    <property type="project" value="BHF-UCL"/>
</dbReference>
<dbReference type="CDD" id="cd00063">
    <property type="entry name" value="FN3"/>
    <property type="match status" value="4"/>
</dbReference>
<dbReference type="FunFam" id="2.60.40.10:FF:000578">
    <property type="entry name" value="Leukemia inhibitory factor receptor"/>
    <property type="match status" value="1"/>
</dbReference>
<dbReference type="FunFam" id="2.60.40.10:FF:000607">
    <property type="entry name" value="Leukemia inhibitory factor receptor"/>
    <property type="match status" value="1"/>
</dbReference>
<dbReference type="FunFam" id="2.60.40.10:FF:000657">
    <property type="entry name" value="Leukemia inhibitory factor receptor"/>
    <property type="match status" value="1"/>
</dbReference>
<dbReference type="FunFam" id="2.60.40.10:FF:000738">
    <property type="entry name" value="Leukemia inhibitory factor receptor"/>
    <property type="match status" value="1"/>
</dbReference>
<dbReference type="FunFam" id="2.60.40.10:FF:001286">
    <property type="entry name" value="Oncostatin-M-specific receptor subunit beta"/>
    <property type="match status" value="1"/>
</dbReference>
<dbReference type="FunFam" id="2.60.40.10:FF:001289">
    <property type="entry name" value="Oncostatin-M-specific receptor subunit beta"/>
    <property type="match status" value="1"/>
</dbReference>
<dbReference type="FunFam" id="2.60.40.10:FF:001148">
    <property type="entry name" value="oncostatin-M-specific receptor subunit beta"/>
    <property type="match status" value="1"/>
</dbReference>
<dbReference type="Gene3D" id="2.60.40.10">
    <property type="entry name" value="Immunoglobulins"/>
    <property type="match status" value="7"/>
</dbReference>
<dbReference type="InterPro" id="IPR003961">
    <property type="entry name" value="FN3_dom"/>
</dbReference>
<dbReference type="InterPro" id="IPR036116">
    <property type="entry name" value="FN3_sf"/>
</dbReference>
<dbReference type="InterPro" id="IPR003529">
    <property type="entry name" value="Hematopoietin_rcpt_Gp130_CS"/>
</dbReference>
<dbReference type="InterPro" id="IPR013783">
    <property type="entry name" value="Ig-like_fold"/>
</dbReference>
<dbReference type="InterPro" id="IPR048497">
    <property type="entry name" value="LIF-R-like_Ig-like"/>
</dbReference>
<dbReference type="InterPro" id="IPR040817">
    <property type="entry name" value="LIFR_D2"/>
</dbReference>
<dbReference type="InterPro" id="IPR052672">
    <property type="entry name" value="Type1_Cytokine_Rcpt_Type2"/>
</dbReference>
<dbReference type="PANTHER" id="PTHR48423">
    <property type="entry name" value="INTERLEUKIN-27 RECEPTOR SUBUNIT ALPHA"/>
    <property type="match status" value="1"/>
</dbReference>
<dbReference type="PANTHER" id="PTHR48423:SF1">
    <property type="entry name" value="INTERLEUKIN-27 RECEPTOR SUBUNIT ALPHA"/>
    <property type="match status" value="1"/>
</dbReference>
<dbReference type="Pfam" id="PF00041">
    <property type="entry name" value="fn3"/>
    <property type="match status" value="2"/>
</dbReference>
<dbReference type="Pfam" id="PF21177">
    <property type="entry name" value="LIF-R_Ig-like"/>
    <property type="match status" value="1"/>
</dbReference>
<dbReference type="Pfam" id="PF17971">
    <property type="entry name" value="LIFR_D2"/>
    <property type="match status" value="1"/>
</dbReference>
<dbReference type="SMART" id="SM00060">
    <property type="entry name" value="FN3"/>
    <property type="match status" value="4"/>
</dbReference>
<dbReference type="SUPFAM" id="SSF49265">
    <property type="entry name" value="Fibronectin type III"/>
    <property type="match status" value="3"/>
</dbReference>
<dbReference type="PROSITE" id="PS50853">
    <property type="entry name" value="FN3"/>
    <property type="match status" value="4"/>
</dbReference>
<dbReference type="PROSITE" id="PS01353">
    <property type="entry name" value="HEMATOPO_REC_L_F2"/>
    <property type="match status" value="1"/>
</dbReference>
<feature type="signal peptide" evidence="2">
    <location>
        <begin position="1"/>
        <end position="27"/>
    </location>
</feature>
<feature type="chain" id="PRO_0000259759" description="Oncostatin-M-specific receptor subunit beta">
    <location>
        <begin position="28"/>
        <end position="979"/>
    </location>
</feature>
<feature type="topological domain" description="Extracellular" evidence="2">
    <location>
        <begin position="28"/>
        <end position="740"/>
    </location>
</feature>
<feature type="transmembrane region" description="Helical" evidence="2">
    <location>
        <begin position="741"/>
        <end position="761"/>
    </location>
</feature>
<feature type="topological domain" description="Cytoplasmic" evidence="2">
    <location>
        <begin position="762"/>
        <end position="979"/>
    </location>
</feature>
<feature type="domain" description="Fibronectin type-III 1" evidence="3">
    <location>
        <begin position="335"/>
        <end position="428"/>
    </location>
</feature>
<feature type="domain" description="Fibronectin type-III 2" evidence="3">
    <location>
        <begin position="433"/>
        <end position="528"/>
    </location>
</feature>
<feature type="domain" description="Fibronectin type-III 3" evidence="3">
    <location>
        <begin position="529"/>
        <end position="623"/>
    </location>
</feature>
<feature type="domain" description="Fibronectin type-III 4" evidence="3">
    <location>
        <begin position="625"/>
        <end position="736"/>
    </location>
</feature>
<feature type="short sequence motif" description="WSXWS motif">
    <location>
        <begin position="415"/>
        <end position="419"/>
    </location>
</feature>
<feature type="short sequence motif" description="Box 1 motif">
    <location>
        <begin position="770"/>
        <end position="778"/>
    </location>
</feature>
<feature type="modified residue" description="Phosphoserine" evidence="12">
    <location>
        <position position="826"/>
    </location>
</feature>
<feature type="modified residue" description="Phosphoserine" evidence="12">
    <location>
        <position position="889"/>
    </location>
</feature>
<feature type="glycosylation site" description="N-linked (GlcNAc...) asparagine" evidence="2">
    <location>
        <position position="163"/>
    </location>
</feature>
<feature type="glycosylation site" description="N-linked (GlcNAc...) asparagine" evidence="2">
    <location>
        <position position="326"/>
    </location>
</feature>
<feature type="glycosylation site" description="N-linked (GlcNAc...) asparagine" evidence="2">
    <location>
        <position position="380"/>
    </location>
</feature>
<feature type="glycosylation site" description="N-linked (GlcNAc...) asparagine" evidence="2">
    <location>
        <position position="446"/>
    </location>
</feature>
<feature type="glycosylation site" description="N-linked (GlcNAc...) asparagine" evidence="2">
    <location>
        <position position="580"/>
    </location>
</feature>
<feature type="disulfide bond" evidence="1">
    <location>
        <begin position="245"/>
        <end position="255"/>
    </location>
</feature>
<feature type="splice variant" id="VSP_021527" description="In isoform 2." evidence="10">
    <original>VYLMNPFSVNFE</original>
    <variation>GETRVVTAHRGH</variation>
    <location>
        <begin position="331"/>
        <end position="342"/>
    </location>
</feature>
<feature type="splice variant" id="VSP_021528" description="In isoform 2." evidence="10">
    <location>
        <begin position="343"/>
        <end position="979"/>
    </location>
</feature>
<feature type="sequence variant" id="VAR_043512" description="In dbSNP:rs34675408.">
    <original>H</original>
    <variation>Q</variation>
    <location>
        <position position="187"/>
    </location>
</feature>
<feature type="sequence variant" id="VAR_028972" description="In dbSNP:rs17855841." evidence="5">
    <original>G</original>
    <variation>W</variation>
    <location>
        <position position="210"/>
    </location>
</feature>
<feature type="sequence variant" id="VAR_028973" description="In dbSNP:rs10941412.">
    <original>E</original>
    <variation>K</variation>
    <location>
        <position position="527"/>
    </location>
</feature>
<feature type="sequence variant" id="VAR_028974" description="In dbSNP:rs2278329.">
    <original>D</original>
    <variation>N</variation>
    <location>
        <position position="553"/>
    </location>
</feature>
<feature type="sequence variant" id="VAR_043513" description="In PLCA1; dbSNP:rs63750560." evidence="6">
    <original>G</original>
    <variation>A</variation>
    <location>
        <position position="618"/>
    </location>
</feature>
<feature type="sequence variant" id="VAR_065810" description="In PLCA1; dbSNP:rs387906821." evidence="7">
    <original>D</original>
    <variation>V</variation>
    <location>
        <position position="647"/>
    </location>
</feature>
<feature type="sequence variant" id="VAR_043514" description="In PLCA1; dbSNP:rs63750567." evidence="6">
    <original>I</original>
    <variation>T</variation>
    <location>
        <position position="691"/>
    </location>
</feature>
<feature type="sequence variant" id="VAR_065811" description="In PLCA1; dbSNP:rs387906822." evidence="7">
    <original>P</original>
    <variation>L</variation>
    <location>
        <position position="694"/>
    </location>
</feature>
<feature type="sequence variant" id="VAR_065812" description="In PLCA1; dbSNP:rs387906823." evidence="7">
    <original>K</original>
    <variation>T</variation>
    <location>
        <position position="697"/>
    </location>
</feature>
<feature type="sequence variant" id="VAR_028975" description="In dbSNP:rs3749737.">
    <original>P</original>
    <variation>S</variation>
    <location>
        <position position="936"/>
    </location>
</feature>
<feature type="sequence variant" id="VAR_043515" description="In dbSNP:rs34080825.">
    <original>P</original>
    <variation>R</variation>
    <location>
        <position position="959"/>
    </location>
</feature>
<proteinExistence type="evidence at protein level"/>
<evidence type="ECO:0000250" key="1"/>
<evidence type="ECO:0000255" key="2"/>
<evidence type="ECO:0000255" key="3">
    <source>
        <dbReference type="PROSITE-ProRule" id="PRU00316"/>
    </source>
</evidence>
<evidence type="ECO:0000269" key="4">
    <source>
    </source>
</evidence>
<evidence type="ECO:0000269" key="5">
    <source>
    </source>
</evidence>
<evidence type="ECO:0000269" key="6">
    <source>
    </source>
</evidence>
<evidence type="ECO:0000269" key="7">
    <source>
    </source>
</evidence>
<evidence type="ECO:0000269" key="8">
    <source>
    </source>
</evidence>
<evidence type="ECO:0000269" key="9">
    <source>
    </source>
</evidence>
<evidence type="ECO:0000303" key="10">
    <source>
    </source>
</evidence>
<evidence type="ECO:0000305" key="11"/>
<evidence type="ECO:0007744" key="12">
    <source>
    </source>
</evidence>
<accession>Q99650</accession>
<accession>Q6P4E8</accession>
<accession>Q96QJ6</accession>
<keyword id="KW-0025">Alternative splicing</keyword>
<keyword id="KW-1008">Amyloidosis</keyword>
<keyword id="KW-0225">Disease variant</keyword>
<keyword id="KW-1015">Disulfide bond</keyword>
<keyword id="KW-0325">Glycoprotein</keyword>
<keyword id="KW-0472">Membrane</keyword>
<keyword id="KW-0597">Phosphoprotein</keyword>
<keyword id="KW-1267">Proteomics identification</keyword>
<keyword id="KW-0675">Receptor</keyword>
<keyword id="KW-1185">Reference proteome</keyword>
<keyword id="KW-0677">Repeat</keyword>
<keyword id="KW-0732">Signal</keyword>
<keyword id="KW-0812">Transmembrane</keyword>
<keyword id="KW-1133">Transmembrane helix</keyword>
<reference key="1">
    <citation type="journal article" date="1996" name="J. Biol. Chem.">
        <title>Dual oncostatin M (OSM) receptors. Cloning and characterization of an alternative signaling subunit conferring OSM-specific receptor activation.</title>
        <authorList>
            <person name="Mosley B."/>
            <person name="De Imus C."/>
            <person name="Friend D."/>
            <person name="Boiani N."/>
            <person name="Thoma B."/>
            <person name="Park L.S."/>
            <person name="Cosman D."/>
        </authorList>
    </citation>
    <scope>NUCLEOTIDE SEQUENCE [MRNA] (ISOFORM 1)</scope>
    <scope>FUNCTION</scope>
    <scope>SUBUNIT</scope>
    <scope>INDUCTION</scope>
    <scope>TISSUE SPECIFICITY</scope>
</reference>
<reference key="2">
    <citation type="journal article" date="2004" name="Genome Res.">
        <title>The status, quality, and expansion of the NIH full-length cDNA project: the Mammalian Gene Collection (MGC).</title>
        <authorList>
            <consortium name="The MGC Project Team"/>
        </authorList>
    </citation>
    <scope>NUCLEOTIDE SEQUENCE [LARGE SCALE MRNA] (ISOFORMS 1 AND 2)</scope>
    <scope>VARIANT TRP-210</scope>
    <source>
        <tissue>Colon</tissue>
        <tissue>Placenta</tissue>
    </source>
</reference>
<reference key="3">
    <citation type="journal article" date="2004" name="Nat. Immunol.">
        <title>Interleukin 31, a cytokine produced by activated T cells, induces dermatitis in mice.</title>
        <authorList>
            <person name="Dillon S.R."/>
            <person name="Sprecher C."/>
            <person name="Hammond A."/>
            <person name="Bilsborough J."/>
            <person name="Rosenfeld-Franklin M."/>
            <person name="Presnell S.R."/>
            <person name="Haugen H.S."/>
            <person name="Maurer M."/>
            <person name="Harder B."/>
            <person name="Johnston J."/>
            <person name="Bort S."/>
            <person name="Mudri S."/>
            <person name="Kuijper J.L."/>
            <person name="Bukowski T."/>
            <person name="Shea P."/>
            <person name="Dong D.L."/>
            <person name="Dasovich M."/>
            <person name="Grant F.J."/>
            <person name="Lockwood L."/>
            <person name="Levin S.D."/>
            <person name="LeCiel C."/>
            <person name="Waggie K."/>
            <person name="Day H."/>
            <person name="Topouzis S."/>
            <person name="Kramer J."/>
            <person name="Kuestner R."/>
            <person name="Chen Z."/>
            <person name="Foster D."/>
            <person name="Parrish-Novak J."/>
            <person name="Gross J.A."/>
        </authorList>
    </citation>
    <scope>FUNCTION</scope>
    <scope>OLIGOMERIZATION</scope>
    <scope>INDUCTION</scope>
</reference>
<reference key="4">
    <citation type="journal article" date="2008" name="Proc. Natl. Acad. Sci. U.S.A.">
        <title>A quantitative atlas of mitotic phosphorylation.</title>
        <authorList>
            <person name="Dephoure N."/>
            <person name="Zhou C."/>
            <person name="Villen J."/>
            <person name="Beausoleil S.A."/>
            <person name="Bakalarski C.E."/>
            <person name="Elledge S.J."/>
            <person name="Gygi S.P."/>
        </authorList>
    </citation>
    <scope>PHOSPHORYLATION [LARGE SCALE ANALYSIS] AT SER-826 AND SER-889</scope>
    <scope>IDENTIFICATION BY MASS SPECTROMETRY [LARGE SCALE ANALYSIS]</scope>
    <source>
        <tissue>Cervix carcinoma</tissue>
    </source>
</reference>
<reference key="5">
    <citation type="journal article" date="2010" name="Sci. Signal.">
        <title>Quantitative phosphoproteomics reveals widespread full phosphorylation site occupancy during mitosis.</title>
        <authorList>
            <person name="Olsen J.V."/>
            <person name="Vermeulen M."/>
            <person name="Santamaria A."/>
            <person name="Kumar C."/>
            <person name="Miller M.L."/>
            <person name="Jensen L.J."/>
            <person name="Gnad F."/>
            <person name="Cox J."/>
            <person name="Jensen T.S."/>
            <person name="Nigg E.A."/>
            <person name="Brunak S."/>
            <person name="Mann M."/>
        </authorList>
    </citation>
    <scope>IDENTIFICATION BY MASS SPECTROMETRY [LARGE SCALE ANALYSIS]</scope>
    <source>
        <tissue>Cervix carcinoma</tissue>
    </source>
</reference>
<reference key="6">
    <citation type="journal article" date="2011" name="Allergy">
        <title>Functional effects of interleukin 31 in human primary keratinocytes.</title>
        <authorList>
            <person name="Kasraie S."/>
            <person name="Niebuhr M."/>
            <person name="Baumert K."/>
            <person name="Werfel T."/>
        </authorList>
    </citation>
    <scope>TISSUE SPECIFICITY</scope>
    <scope>INDUCTION</scope>
</reference>
<reference key="7">
    <citation type="journal article" date="2008" name="Am. J. Hum. Genet.">
        <title>Oncostatin M receptor-beta mutations underlie familial primary localized cutaneous amyloidosis.</title>
        <authorList>
            <person name="Arita K."/>
            <person name="South A.P."/>
            <person name="Hans-Filho G."/>
            <person name="Sakuma T.H."/>
            <person name="Lai-Cheong J."/>
            <person name="Clements S."/>
            <person name="Odashiro M."/>
            <person name="Odashiro D.N."/>
            <person name="Hans-Neto G."/>
            <person name="Hans N.R."/>
            <person name="Holder M.V."/>
            <person name="Bhogal B.S."/>
            <person name="Hartshorne S.T."/>
            <person name="Akiyama M."/>
            <person name="Shimizu H."/>
            <person name="McGrath J.A."/>
        </authorList>
    </citation>
    <scope>VARIANTS PLCA1 ALA-618 AND THR-691</scope>
</reference>
<reference key="8">
    <citation type="journal article" date="2010" name="Eur. J. Hum. Genet.">
        <title>Novel IL31RA gene mutation and ancestral OSMR mutant allele in familial primary cutaneous amyloidosis.</title>
        <authorList>
            <person name="Lin M.W."/>
            <person name="Lee D.D."/>
            <person name="Liu T.T."/>
            <person name="Lin Y.F."/>
            <person name="Chen S.Y."/>
            <person name="Huang C.C."/>
            <person name="Weng H.Y."/>
            <person name="Liu Y.F."/>
            <person name="Tanaka A."/>
            <person name="Arita K."/>
            <person name="Lai-Cheong J."/>
            <person name="Palisson F."/>
            <person name="Chang Y.T."/>
            <person name="Wong C.K."/>
            <person name="Matsuura I."/>
            <person name="McGrath J.A."/>
            <person name="Tsai S.F."/>
        </authorList>
    </citation>
    <scope>VARIANTS PLCA1 VAL-647; LEU-694 AND THR-697</scope>
</reference>
<comment type="function">
    <text evidence="4 9">Associates with IL31RA to form the IL31 receptor. Binds IL31 to activate STAT3 and possibly STAT1 and STAT5. Capable of transducing OSM-specific signaling events.</text>
</comment>
<comment type="subunit">
    <text evidence="9">Heterodimer composed of OSMR and IL6ST (type II OSM receptor). Heterodimer with IL31RA to form the IL31 receptor.</text>
</comment>
<comment type="interaction">
    <interactant intactId="EBI-2804080">
        <id>Q99650</id>
    </interactant>
    <interactant intactId="EBI-718459">
        <id>Q9UII2</id>
        <label>ATP5IF1</label>
    </interactant>
    <organismsDiffer>false</organismsDiffer>
    <experiments>4</experiments>
</comment>
<comment type="interaction">
    <interactant intactId="EBI-2804080">
        <id>Q99650</id>
    </interactant>
    <interactant intactId="EBI-13067820">
        <id>Q9NZD1</id>
        <label>GPRC5D</label>
    </interactant>
    <organismsDiffer>false</organismsDiffer>
    <experiments>3</experiments>
</comment>
<comment type="interaction">
    <interactant intactId="EBI-2804080">
        <id>Q99650</id>
    </interactant>
    <interactant intactId="EBI-354932">
        <id>P38646</id>
        <label>HSPA9</label>
    </interactant>
    <organismsDiffer>false</organismsDiffer>
    <experiments>4</experiments>
</comment>
<comment type="interaction">
    <interactant intactId="EBI-2804080">
        <id>Q99650</id>
    </interactant>
    <interactant intactId="EBI-1030834">
        <id>P40189</id>
        <label>IL6ST</label>
    </interactant>
    <organismsDiffer>false</organismsDiffer>
    <experiments>2</experiments>
</comment>
<comment type="interaction">
    <interactant intactId="EBI-2804080">
        <id>Q99650</id>
    </interactant>
    <interactant intactId="EBI-1383438">
        <id>P23458</id>
        <label>JAK1</label>
    </interactant>
    <organismsDiffer>false</organismsDiffer>
    <experiments>2</experiments>
</comment>
<comment type="interaction">
    <interactant intactId="EBI-2804080">
        <id>Q99650</id>
    </interactant>
    <interactant intactId="EBI-12179869">
        <id>P50458</id>
        <label>LHX2</label>
    </interactant>
    <organismsDiffer>false</organismsDiffer>
    <experiments>3</experiments>
</comment>
<comment type="interaction">
    <interactant intactId="EBI-2804080">
        <id>Q99650</id>
    </interactant>
    <interactant intactId="EBI-1043922">
        <id>P28331</id>
        <label>NDUFS1</label>
    </interactant>
    <organismsDiffer>false</organismsDiffer>
    <experiments>4</experiments>
</comment>
<comment type="interaction">
    <interactant intactId="EBI-2804080">
        <id>Q99650</id>
    </interactant>
    <interactant intactId="EBI-1224806">
        <id>O75306</id>
        <label>NDUFS2</label>
    </interactant>
    <organismsDiffer>false</organismsDiffer>
    <experiments>4</experiments>
</comment>
<comment type="interaction">
    <interactant intactId="EBI-2804080">
        <id>Q99650</id>
    </interactant>
    <interactant intactId="EBI-744081">
        <id>Q96EQ0</id>
        <label>SGTB</label>
    </interactant>
    <organismsDiffer>false</organismsDiffer>
    <experiments>3</experiments>
</comment>
<comment type="interaction">
    <interactant intactId="EBI-2804080">
        <id>Q99650</id>
    </interactant>
    <interactant intactId="EBI-18159983">
        <id>Q3KNW5</id>
        <label>SLC10A6</label>
    </interactant>
    <organismsDiffer>false</organismsDiffer>
    <experiments>3</experiments>
</comment>
<comment type="interaction">
    <interactant intactId="EBI-2804080">
        <id>Q99650</id>
    </interactant>
    <interactant intactId="EBI-947187">
        <id>Q9UHD9</id>
        <label>UBQLN2</label>
    </interactant>
    <organismsDiffer>false</organismsDiffer>
    <experiments>3</experiments>
</comment>
<comment type="subcellular location">
    <subcellularLocation>
        <location evidence="11">Membrane</location>
        <topology evidence="11">Single-pass type I membrane protein</topology>
    </subcellularLocation>
</comment>
<comment type="alternative products">
    <event type="alternative splicing"/>
    <isoform>
        <id>Q99650-1</id>
        <name>1</name>
        <sequence type="displayed"/>
    </isoform>
    <isoform>
        <id>Q99650-2</id>
        <name>2</name>
        <sequence type="described" ref="VSP_021527 VSP_021528"/>
    </isoform>
</comment>
<comment type="tissue specificity">
    <text evidence="8 9">Expressed in keratinocytes (at protein level) (PubMed:21261663). Expressed at relatively high levels in all neural cells as well as fibroblast and epithelial cells (PubMed:8999038).</text>
</comment>
<comment type="induction">
    <text evidence="4 8 9">Activated by oncostatin-M (PubMed:8999038). Up-regulated by IFNG/IFN-gamma (PubMed:15184896, PubMed:21261663). Up-regulated by bacterial lipopolysaccharides (LPS) (PubMed:15184896). Up-regulated by triacylated lipoprotein (Pam3Cys) (PubMed:21261663).</text>
</comment>
<comment type="domain">
    <text evidence="1">The WSXWS motif appears to be necessary for proper protein folding and thereby efficient intracellular transport and cell-surface receptor binding.</text>
</comment>
<comment type="domain">
    <text evidence="1">The box 1 motif is required for JAK interaction and/or activation.</text>
</comment>
<comment type="disease" evidence="6 7">
    <disease id="DI-00105">
        <name>Amyloidosis, primary localized cutaneous, 1</name>
        <acronym>PLCA1</acronym>
        <description>A primary amyloidosis characterized by localized cutaneous amyloid deposition. This condition usually presents with itching (especially on the lower legs) and visible changes of skin hyperpigmentation and thickening that may be exacerbated by chronic scratching and rubbing. Primary localized cutaneous amyloidosis is often divided into macular and lichen subtypes although many affected individuals often show both variants coexisting. Lichen amyloidosis characteristically presents as a pruritic eruption of grouped hyperkeratotic papules with a predilection for the shins, calves, ankles and dorsa of feet and thighs. Papules may coalesce to form hyperkeratotic plaques that can resemble lichen planus, lichen simplex or nodular prurigo. Macular amyloidosis is characterized by small pigmented macules that may merge to produce macular hyperpigmentation, sometimes with a reticulate or rippled pattern. In macular and lichen amyloidosis, amyloid is deposited in the papillary dermis in association with grouped colloid bodies, thought to represent degenerate basal keratinocytes. The amyloid deposits probably reflect a combination of degenerate keratin filaments, serum amyloid P component, and deposition of immunoglobulins.</description>
        <dbReference type="MIM" id="105250"/>
    </disease>
    <text>The disease is caused by variants affecting the gene represented in this entry.</text>
</comment>
<comment type="similarity">
    <text evidence="11">Belongs to the type I cytokine receptor family. Type 2 subfamily.</text>
</comment>
<comment type="sequence caution" evidence="11">
    <conflict type="erroneous termination">
        <sequence resource="EMBL-CDS" id="AAH63468"/>
    </conflict>
    <text>Truncated C-terminus.</text>
</comment>
<comment type="sequence caution" evidence="11">
    <conflict type="frameshift">
        <sequence resource="EMBL-CDS" id="AAH63468"/>
    </conflict>
</comment>